<comment type="catalytic activity">
    <reaction>
        <text>S-adenosyl 3-(methylsulfanyl)propylamine + putrescine = S-methyl-5'-thioadenosine + spermidine + H(+)</text>
        <dbReference type="Rhea" id="RHEA:12721"/>
        <dbReference type="ChEBI" id="CHEBI:15378"/>
        <dbReference type="ChEBI" id="CHEBI:17509"/>
        <dbReference type="ChEBI" id="CHEBI:57443"/>
        <dbReference type="ChEBI" id="CHEBI:57834"/>
        <dbReference type="ChEBI" id="CHEBI:326268"/>
        <dbReference type="EC" id="2.5.1.16"/>
    </reaction>
</comment>
<comment type="pathway">
    <text>Amine and polyamine biosynthesis; spermidine biosynthesis; spermidine from putrescine: step 1/1.</text>
</comment>
<comment type="similarity">
    <text evidence="2">Belongs to the spermidine/spermine synthase family.</text>
</comment>
<feature type="chain" id="PRO_0000156451" description="Spermidine synthase 1">
    <location>
        <begin position="1"/>
        <end position="308"/>
    </location>
</feature>
<feature type="domain" description="PABS">
    <location>
        <begin position="17"/>
        <end position="254"/>
    </location>
</feature>
<feature type="active site" description="Proton acceptor" evidence="1">
    <location>
        <position position="173"/>
    </location>
</feature>
<feature type="binding site" evidence="1">
    <location>
        <position position="48"/>
    </location>
    <ligand>
        <name>S-adenosyl 3-(methylsulfanyl)propylamine</name>
        <dbReference type="ChEBI" id="CHEBI:57443"/>
    </ligand>
</feature>
<feature type="binding site" evidence="1">
    <location>
        <position position="78"/>
    </location>
    <ligand>
        <name>putrescine</name>
        <dbReference type="ChEBI" id="CHEBI:326268"/>
    </ligand>
</feature>
<feature type="binding site" evidence="1">
    <location>
        <position position="79"/>
    </location>
    <ligand>
        <name>S-adenosyl 3-(methylsulfanyl)propylamine</name>
        <dbReference type="ChEBI" id="CHEBI:57443"/>
    </ligand>
</feature>
<feature type="binding site" evidence="1">
    <location>
        <position position="103"/>
    </location>
    <ligand>
        <name>S-adenosyl 3-(methylsulfanyl)propylamine</name>
        <dbReference type="ChEBI" id="CHEBI:57443"/>
    </ligand>
</feature>
<feature type="binding site" evidence="1">
    <location>
        <position position="123"/>
    </location>
    <ligand>
        <name>S-adenosyl 3-(methylsulfanyl)propylamine</name>
        <dbReference type="ChEBI" id="CHEBI:57443"/>
    </ligand>
</feature>
<feature type="binding site" evidence="1">
    <location>
        <begin position="154"/>
        <end position="155"/>
    </location>
    <ligand>
        <name>S-adenosyl 3-(methylsulfanyl)propylamine</name>
        <dbReference type="ChEBI" id="CHEBI:57443"/>
    </ligand>
</feature>
<feature type="binding site" evidence="1">
    <location>
        <begin position="173"/>
        <end position="176"/>
    </location>
    <ligand>
        <name>putrescine</name>
        <dbReference type="ChEBI" id="CHEBI:326268"/>
    </ligand>
</feature>
<feature type="binding site" evidence="1">
    <location>
        <position position="173"/>
    </location>
    <ligand>
        <name>S-adenosyl 3-(methylsulfanyl)propylamine</name>
        <dbReference type="ChEBI" id="CHEBI:57443"/>
    </ligand>
</feature>
<feature type="binding site" evidence="1">
    <location>
        <position position="242"/>
    </location>
    <ligand>
        <name>putrescine</name>
        <dbReference type="ChEBI" id="CHEBI:326268"/>
    </ligand>
</feature>
<accession>Q96556</accession>
<sequence length="308" mass="34033">MEEANNKESPYISSILPGWFSEISPLWPGEAHSLKVEKILFQGKSDYQNVMVFQSSTYGKVLILDGVIQLTERDECAYQEMITHLPLCSIPNPKKVLVIGGGDGGVLREVSRHSSVEQIDICEIDKMVIDVSKQFFPNVAIGYEDPRVKLHVGDGVAFLKFVAEGTYDAVIVDSSDPIGPAQELFEKPFFESVARALRPGGVVCTQAESIWLHMHIIEDIVANCRQIFKGSVNYAWTTVPTYPSGVIGFMLCSTEGPAVDFKNPINPVDADDSHTKTRGPLKFYNSEIHSASFCLPSFAKRVIESKGK</sequence>
<reference key="1">
    <citation type="submission" date="1996-09" db="EMBL/GenBank/DDBJ databases">
        <authorList>
            <person name="Michael A.J."/>
        </authorList>
    </citation>
    <scope>NUCLEOTIDE SEQUENCE [MRNA]</scope>
    <source>
        <strain>D5/15</strain>
        <tissue>Root</tissue>
    </source>
</reference>
<organism>
    <name type="scientific">Datura stramonium</name>
    <name type="common">Jimsonweed</name>
    <name type="synonym">Common thornapple</name>
    <dbReference type="NCBI Taxonomy" id="4076"/>
    <lineage>
        <taxon>Eukaryota</taxon>
        <taxon>Viridiplantae</taxon>
        <taxon>Streptophyta</taxon>
        <taxon>Embryophyta</taxon>
        <taxon>Tracheophyta</taxon>
        <taxon>Spermatophyta</taxon>
        <taxon>Magnoliopsida</taxon>
        <taxon>eudicotyledons</taxon>
        <taxon>Gunneridae</taxon>
        <taxon>Pentapetalae</taxon>
        <taxon>asterids</taxon>
        <taxon>lamiids</taxon>
        <taxon>Solanales</taxon>
        <taxon>Solanaceae</taxon>
        <taxon>Solanoideae</taxon>
        <taxon>Datureae</taxon>
        <taxon>Datura</taxon>
    </lineage>
</organism>
<proteinExistence type="evidence at transcript level"/>
<keyword id="KW-0620">Polyamine biosynthesis</keyword>
<keyword id="KW-0745">Spermidine biosynthesis</keyword>
<keyword id="KW-0808">Transferase</keyword>
<evidence type="ECO:0000250" key="1"/>
<evidence type="ECO:0000305" key="2"/>
<name>SPDS1_DATST</name>
<protein>
    <recommendedName>
        <fullName>Spermidine synthase 1</fullName>
        <shortName>SPDSY 1</shortName>
        <ecNumber>2.5.1.16</ecNumber>
    </recommendedName>
    <alternativeName>
        <fullName>Putrescine aminopropyltransferase 1</fullName>
    </alternativeName>
</protein>
<dbReference type="EC" id="2.5.1.16"/>
<dbReference type="EMBL" id="Y08252">
    <property type="protein sequence ID" value="CAA69420.1"/>
    <property type="molecule type" value="mRNA"/>
</dbReference>
<dbReference type="SMR" id="Q96556"/>
<dbReference type="UniPathway" id="UPA00248">
    <property type="reaction ID" value="UER00314"/>
</dbReference>
<dbReference type="GO" id="GO:0005829">
    <property type="term" value="C:cytosol"/>
    <property type="evidence" value="ECO:0007669"/>
    <property type="project" value="TreeGrafter"/>
</dbReference>
<dbReference type="GO" id="GO:0004766">
    <property type="term" value="F:spermidine synthase activity"/>
    <property type="evidence" value="ECO:0007669"/>
    <property type="project" value="UniProtKB-EC"/>
</dbReference>
<dbReference type="GO" id="GO:0008295">
    <property type="term" value="P:spermidine biosynthetic process"/>
    <property type="evidence" value="ECO:0007669"/>
    <property type="project" value="UniProtKB-UniPathway"/>
</dbReference>
<dbReference type="CDD" id="cd02440">
    <property type="entry name" value="AdoMet_MTases"/>
    <property type="match status" value="1"/>
</dbReference>
<dbReference type="FunFam" id="2.30.140.10:FF:000003">
    <property type="entry name" value="Spermidine synthase 1"/>
    <property type="match status" value="1"/>
</dbReference>
<dbReference type="FunFam" id="3.40.50.150:FF:000048">
    <property type="entry name" value="Spermidine synthase 1"/>
    <property type="match status" value="1"/>
</dbReference>
<dbReference type="Gene3D" id="2.30.140.10">
    <property type="entry name" value="Spermidine synthase, tetramerisation domain"/>
    <property type="match status" value="1"/>
</dbReference>
<dbReference type="Gene3D" id="3.40.50.150">
    <property type="entry name" value="Vaccinia Virus protein VP39"/>
    <property type="match status" value="1"/>
</dbReference>
<dbReference type="HAMAP" id="MF_00198">
    <property type="entry name" value="Spermidine_synth"/>
    <property type="match status" value="1"/>
</dbReference>
<dbReference type="InterPro" id="IPR030374">
    <property type="entry name" value="PABS"/>
</dbReference>
<dbReference type="InterPro" id="IPR030373">
    <property type="entry name" value="PABS_CS"/>
</dbReference>
<dbReference type="InterPro" id="IPR029063">
    <property type="entry name" value="SAM-dependent_MTases_sf"/>
</dbReference>
<dbReference type="InterPro" id="IPR001045">
    <property type="entry name" value="Spermi_synthase"/>
</dbReference>
<dbReference type="InterPro" id="IPR030668">
    <property type="entry name" value="Spermi_synthase_euk"/>
</dbReference>
<dbReference type="InterPro" id="IPR035246">
    <property type="entry name" value="Spermidine_synt_N"/>
</dbReference>
<dbReference type="InterPro" id="IPR037163">
    <property type="entry name" value="Spermidine_synt_N_sf"/>
</dbReference>
<dbReference type="NCBIfam" id="NF002010">
    <property type="entry name" value="PRK00811.1"/>
    <property type="match status" value="1"/>
</dbReference>
<dbReference type="NCBIfam" id="TIGR00417">
    <property type="entry name" value="speE"/>
    <property type="match status" value="1"/>
</dbReference>
<dbReference type="PANTHER" id="PTHR11558:SF11">
    <property type="entry name" value="SPERMIDINE SYNTHASE"/>
    <property type="match status" value="1"/>
</dbReference>
<dbReference type="PANTHER" id="PTHR11558">
    <property type="entry name" value="SPERMIDINE/SPERMINE SYNTHASE"/>
    <property type="match status" value="1"/>
</dbReference>
<dbReference type="Pfam" id="PF17284">
    <property type="entry name" value="Spermine_synt_N"/>
    <property type="match status" value="1"/>
</dbReference>
<dbReference type="Pfam" id="PF01564">
    <property type="entry name" value="Spermine_synth"/>
    <property type="match status" value="1"/>
</dbReference>
<dbReference type="PIRSF" id="PIRSF000502">
    <property type="entry name" value="Spermidine_synth"/>
    <property type="match status" value="1"/>
</dbReference>
<dbReference type="SUPFAM" id="SSF53335">
    <property type="entry name" value="S-adenosyl-L-methionine-dependent methyltransferases"/>
    <property type="match status" value="1"/>
</dbReference>
<dbReference type="PROSITE" id="PS01330">
    <property type="entry name" value="PABS_1"/>
    <property type="match status" value="1"/>
</dbReference>
<dbReference type="PROSITE" id="PS51006">
    <property type="entry name" value="PABS_2"/>
    <property type="match status" value="1"/>
</dbReference>